<comment type="function">
    <text evidence="5 6">Catalyzes the conjugation of the 1'-hydroxyl group of D-myo-inositol-3-phosphate (also named L-myo-inositol-1-phosphate) with a lipid tail of cytidine diphosphate diacylglycerol (CDP-DAG), forming phosphatidylinositol phosphate (PIP) and CMP. PIP is a precursor of phosphatidylinositol (PI) which is an essential lipid for mycobacteria required for formation of their cell wall (PubMed:20798167). Is essential to the survival of M.smegmatis (PubMed:10889206).</text>
</comment>
<comment type="catalytic activity">
    <reaction evidence="6">
        <text>a CDP-1,2-diacyl-sn-glycerol + 1D-myo-inositol 3-phosphate = a 1,2-diacyl-sn-glycero-3-phospho-(1D-myo-inositol-3-phosphate) + CMP + H(+)</text>
        <dbReference type="Rhea" id="RHEA:60504"/>
        <dbReference type="ChEBI" id="CHEBI:15378"/>
        <dbReference type="ChEBI" id="CHEBI:58088"/>
        <dbReference type="ChEBI" id="CHEBI:58332"/>
        <dbReference type="ChEBI" id="CHEBI:58401"/>
        <dbReference type="ChEBI" id="CHEBI:60377"/>
    </reaction>
</comment>
<comment type="catalytic activity">
    <reaction evidence="6">
        <text>1,2-di-(9Z-octadecenoyl)-sn-glycero-3-cytidine-5'-diphosphate + 1D-myo-inositol 3-phosphate = 1,2-di-(9Z-octadecenoyl)-sn-glycero-3-phospho-(1D-myo-inositol-3-phosphate) + CMP + H(+)</text>
        <dbReference type="Rhea" id="RHEA:61216"/>
        <dbReference type="ChEBI" id="CHEBI:15378"/>
        <dbReference type="ChEBI" id="CHEBI:58401"/>
        <dbReference type="ChEBI" id="CHEBI:60377"/>
        <dbReference type="ChEBI" id="CHEBI:85356"/>
        <dbReference type="ChEBI" id="CHEBI:144472"/>
    </reaction>
</comment>
<comment type="catalytic activity">
    <reaction evidence="6">
        <text>1,2-dihexadecanoyl-sn-glycero-3-CDP + 1D-myo-inositol 3-phosphate = 1,2-dihexadecanoyl-sn-glycero-3-phospho-(1D-myo-inositol-3-phosphate) + CMP + H(+)</text>
        <dbReference type="Rhea" id="RHEA:61220"/>
        <dbReference type="ChEBI" id="CHEBI:15378"/>
        <dbReference type="ChEBI" id="CHEBI:58401"/>
        <dbReference type="ChEBI" id="CHEBI:60377"/>
        <dbReference type="ChEBI" id="CHEBI:77190"/>
        <dbReference type="ChEBI" id="CHEBI:78995"/>
    </reaction>
</comment>
<comment type="cofactor">
    <cofactor evidence="2">
        <name>Mg(2+)</name>
        <dbReference type="ChEBI" id="CHEBI:18420"/>
    </cofactor>
    <text evidence="2">Contains a di-nuclear catalytic Mg(2+) center.</text>
</comment>
<comment type="activity regulation">
    <text evidence="1 7">Competitively inhibited by several inositol 1-phosphate analogs, including the phosphonate analog 1-deoxy-1-phosphonomethyl-myo-inositol (Ino-C-P) (By similarity). This leads to inhibition of M.smegmatis growth (PubMed:23225597).</text>
</comment>
<comment type="pathway">
    <text evidence="6">Phospholipid metabolism; phosphatidylinositol phosphate biosynthesis.</text>
</comment>
<comment type="subunit">
    <text evidence="2">Homodimer.</text>
</comment>
<comment type="subcellular location">
    <subcellularLocation>
        <location evidence="10">Cell membrane</location>
        <topology evidence="10">Multi-pass membrane protein</topology>
    </subcellularLocation>
    <subcellularLocation>
        <location evidence="6">Secreted</location>
        <location evidence="6">Cell wall</location>
    </subcellularLocation>
</comment>
<comment type="disruption phenotype">
    <text evidence="5">Allelic exchange at the pgsA chromosomal locus is achievable only when a rescue copy of the pgsA gene is provided to the bacterium, demonstrating gene essentiality.</text>
</comment>
<comment type="similarity">
    <text evidence="4 10">Belongs to the CDP-alcohol phosphatidyltransferase class-I family.</text>
</comment>
<comment type="caution">
    <text evidence="11">Was orginally thought to be a phosphatidylinositol (PI) synthase.</text>
</comment>
<sequence length="222" mass="23335">MSNVYLMTRAAYVKLSRPVAKAALRAGLTPDIVTLAGTAAAVIGALTLFPIGQLWWGAVVVSFFVLADMLDGAMAREQGGGTRFGAVLDATCDRLGDGAVFAGLTWWAAFGLDSPSLVVATLICLVTSQVISYIKARAEASGLRGDGGIIERPERLVIVLIGAGLSDLPFFPLPWTLHVAMWVLAVASVVTLLQRVHAVRTSPGAMEPLHPANGEKPETSEP</sequence>
<reference key="1">
    <citation type="journal article" date="2000" name="J. Biol. Chem.">
        <title>Phosphatidylinositol is an essential phospholipid of mycobacteria.</title>
        <authorList>
            <person name="Jackson M."/>
            <person name="Crick D.C."/>
            <person name="Brennan P.J."/>
        </authorList>
    </citation>
    <scope>NUCLEOTIDE SEQUENCE [GENOMIC DNA]</scope>
    <scope>FUNCTION</scope>
    <scope>DISRUPTION PHENOTYPE</scope>
    <source>
        <strain>ATCC 700084 / mc(2)155</strain>
    </source>
</reference>
<reference key="2">
    <citation type="submission" date="2006-10" db="EMBL/GenBank/DDBJ databases">
        <authorList>
            <person name="Fleischmann R.D."/>
            <person name="Dodson R.J."/>
            <person name="Haft D.H."/>
            <person name="Merkel J.S."/>
            <person name="Nelson W.C."/>
            <person name="Fraser C.M."/>
        </authorList>
    </citation>
    <scope>NUCLEOTIDE SEQUENCE [LARGE SCALE GENOMIC DNA]</scope>
    <source>
        <strain>ATCC 700084 / mc(2)155</strain>
    </source>
</reference>
<reference key="3">
    <citation type="journal article" date="2010" name="J. Biochem.">
        <title>A revised biosynthetic pathway for phosphatidylinositol in Mycobacteria.</title>
        <authorList>
            <person name="Morii H."/>
            <person name="Ogawa M."/>
            <person name="Fukuda K."/>
            <person name="Taniguchi H."/>
            <person name="Koga Y."/>
        </authorList>
    </citation>
    <scope>FUNCTION</scope>
    <scope>CATALYTIC ACTIVITY</scope>
    <scope>PATHWAY</scope>
    <scope>SUBCELLULAR LOCATION</scope>
    <source>
        <strain>ATCC 700084 / mc(2)155</strain>
    </source>
</reference>
<reference key="4">
    <citation type="journal article" date="2013" name="J. Biochem.">
        <title>Studies of inositol 1-phosphate analogues as inhibitors of the phosphatidylinositol phosphate synthase in mycobacteria.</title>
        <authorList>
            <person name="Morii H."/>
            <person name="Okauchi T."/>
            <person name="Nomiya H."/>
            <person name="Ogawa M."/>
            <person name="Fukuda K."/>
            <person name="Taniguchi H."/>
        </authorList>
    </citation>
    <scope>ACTIVITY REGULATION</scope>
</reference>
<feature type="chain" id="PRO_0000393109" description="Phosphatidylinositol phosphate synthase">
    <location>
        <begin position="1"/>
        <end position="222"/>
    </location>
</feature>
<feature type="transmembrane region" description="Helical" evidence="3">
    <location>
        <begin position="32"/>
        <end position="49"/>
    </location>
</feature>
<feature type="transmembrane region" description="Helical" evidence="3">
    <location>
        <begin position="55"/>
        <end position="74"/>
    </location>
</feature>
<feature type="transmembrane region" description="Helical" evidence="3">
    <location>
        <begin position="95"/>
        <end position="112"/>
    </location>
</feature>
<feature type="transmembrane region" description="Helical" evidence="3">
    <location>
        <begin position="118"/>
        <end position="136"/>
    </location>
</feature>
<feature type="transmembrane region" description="Helical" evidence="3">
    <location>
        <begin position="156"/>
        <end position="173"/>
    </location>
</feature>
<feature type="transmembrane region" description="Helical" evidence="3">
    <location>
        <begin position="179"/>
        <end position="196"/>
    </location>
</feature>
<feature type="active site" description="Proton acceptor" evidence="2">
    <location>
        <position position="93"/>
    </location>
</feature>
<feature type="binding site" evidence="2">
    <location>
        <begin position="31"/>
        <end position="34"/>
    </location>
    <ligand>
        <name>a CDP-1,2-diacyl-sn-glycerol</name>
        <dbReference type="ChEBI" id="CHEBI:58332"/>
    </ligand>
</feature>
<feature type="binding site" evidence="2">
    <location>
        <position position="68"/>
    </location>
    <ligand>
        <name>Mg(2+)</name>
        <dbReference type="ChEBI" id="CHEBI:18420"/>
        <label>1</label>
    </ligand>
</feature>
<feature type="binding site" evidence="2">
    <location>
        <position position="68"/>
    </location>
    <ligand>
        <name>Mg(2+)</name>
        <dbReference type="ChEBI" id="CHEBI:18420"/>
        <label>2</label>
    </ligand>
</feature>
<feature type="binding site" evidence="2">
    <location>
        <position position="71"/>
    </location>
    <ligand>
        <name>Mg(2+)</name>
        <dbReference type="ChEBI" id="CHEBI:18420"/>
        <label>1</label>
    </ligand>
</feature>
<feature type="binding site" evidence="2">
    <location>
        <position position="72"/>
    </location>
    <ligand>
        <name>a CDP-1,2-diacyl-sn-glycerol</name>
        <dbReference type="ChEBI" id="CHEBI:58332"/>
    </ligand>
</feature>
<feature type="binding site" evidence="2">
    <location>
        <position position="76"/>
    </location>
    <ligand>
        <name>a CDP-1,2-diacyl-sn-glycerol</name>
        <dbReference type="ChEBI" id="CHEBI:58332"/>
    </ligand>
</feature>
<feature type="binding site" evidence="2">
    <location>
        <position position="82"/>
    </location>
    <ligand>
        <name>a CDP-1,2-diacyl-sn-glycerol</name>
        <dbReference type="ChEBI" id="CHEBI:58332"/>
    </ligand>
</feature>
<feature type="binding site" evidence="2">
    <location>
        <position position="89"/>
    </location>
    <ligand>
        <name>Mg(2+)</name>
        <dbReference type="ChEBI" id="CHEBI:18420"/>
        <label>1</label>
    </ligand>
</feature>
<feature type="binding site" evidence="2">
    <location>
        <position position="89"/>
    </location>
    <ligand>
        <name>Mg(2+)</name>
        <dbReference type="ChEBI" id="CHEBI:18420"/>
        <label>2</label>
    </ligand>
</feature>
<feature type="binding site" evidence="2">
    <location>
        <position position="93"/>
    </location>
    <ligand>
        <name>Mg(2+)</name>
        <dbReference type="ChEBI" id="CHEBI:18420"/>
        <label>2</label>
    </ligand>
</feature>
<organism>
    <name type="scientific">Mycolicibacterium smegmatis (strain ATCC 700084 / mc(2)155)</name>
    <name type="common">Mycobacterium smegmatis</name>
    <dbReference type="NCBI Taxonomy" id="246196"/>
    <lineage>
        <taxon>Bacteria</taxon>
        <taxon>Bacillati</taxon>
        <taxon>Actinomycetota</taxon>
        <taxon>Actinomycetes</taxon>
        <taxon>Mycobacteriales</taxon>
        <taxon>Mycobacteriaceae</taxon>
        <taxon>Mycolicibacterium</taxon>
    </lineage>
</organism>
<proteinExistence type="evidence at protein level"/>
<accession>Q9F7Y9</accession>
<accession>A0QWG4</accession>
<evidence type="ECO:0000250" key="1">
    <source>
        <dbReference type="UniProtKB" id="A0A0H3MFZ3"/>
    </source>
</evidence>
<evidence type="ECO:0000250" key="2">
    <source>
        <dbReference type="UniProtKB" id="P9WPG7"/>
    </source>
</evidence>
<evidence type="ECO:0000255" key="3"/>
<evidence type="ECO:0000255" key="4">
    <source>
        <dbReference type="HAMAP-Rule" id="MF_02241"/>
    </source>
</evidence>
<evidence type="ECO:0000269" key="5">
    <source>
    </source>
</evidence>
<evidence type="ECO:0000269" key="6">
    <source>
    </source>
</evidence>
<evidence type="ECO:0000269" key="7">
    <source>
    </source>
</evidence>
<evidence type="ECO:0000303" key="8">
    <source>
    </source>
</evidence>
<evidence type="ECO:0000303" key="9">
    <source>
    </source>
</evidence>
<evidence type="ECO:0000305" key="10"/>
<evidence type="ECO:0000305" key="11">
    <source>
    </source>
</evidence>
<evidence type="ECO:0000312" key="12">
    <source>
        <dbReference type="EMBL" id="ABK73364.1"/>
    </source>
</evidence>
<dbReference type="EC" id="2.7.8.-" evidence="6"/>
<dbReference type="EMBL" id="AF265558">
    <property type="protein sequence ID" value="AAG17336.1"/>
    <property type="molecule type" value="Genomic_DNA"/>
</dbReference>
<dbReference type="EMBL" id="CP000480">
    <property type="protein sequence ID" value="ABK73364.1"/>
    <property type="molecule type" value="Genomic_DNA"/>
</dbReference>
<dbReference type="RefSeq" id="WP_011728701.1">
    <property type="nucleotide sequence ID" value="NZ_SIJM01000002.1"/>
</dbReference>
<dbReference type="RefSeq" id="YP_887252.1">
    <property type="nucleotide sequence ID" value="NC_008596.1"/>
</dbReference>
<dbReference type="SMR" id="Q9F7Y9"/>
<dbReference type="STRING" id="246196.MSMEG_2933"/>
<dbReference type="PaxDb" id="246196-MSMEI_2859"/>
<dbReference type="KEGG" id="msm:MSMEG_2933"/>
<dbReference type="PATRIC" id="fig|246196.19.peg.2896"/>
<dbReference type="eggNOG" id="COG0558">
    <property type="taxonomic scope" value="Bacteria"/>
</dbReference>
<dbReference type="OrthoDB" id="116551at2"/>
<dbReference type="UniPathway" id="UPA00220"/>
<dbReference type="Proteomes" id="UP000000757">
    <property type="component" value="Chromosome"/>
</dbReference>
<dbReference type="GO" id="GO:0005576">
    <property type="term" value="C:extracellular region"/>
    <property type="evidence" value="ECO:0007669"/>
    <property type="project" value="UniProtKB-KW"/>
</dbReference>
<dbReference type="GO" id="GO:0005886">
    <property type="term" value="C:plasma membrane"/>
    <property type="evidence" value="ECO:0007669"/>
    <property type="project" value="UniProtKB-SubCell"/>
</dbReference>
<dbReference type="GO" id="GO:0003881">
    <property type="term" value="F:CDP-diacylglycerol-inositol 3-phosphatidyltransferase activity"/>
    <property type="evidence" value="ECO:0000250"/>
    <property type="project" value="UniProtKB"/>
</dbReference>
<dbReference type="GO" id="GO:0000287">
    <property type="term" value="F:magnesium ion binding"/>
    <property type="evidence" value="ECO:0007669"/>
    <property type="project" value="UniProtKB-UniRule"/>
</dbReference>
<dbReference type="GO" id="GO:0008654">
    <property type="term" value="P:phospholipid biosynthetic process"/>
    <property type="evidence" value="ECO:0000250"/>
    <property type="project" value="UniProtKB"/>
</dbReference>
<dbReference type="Gene3D" id="1.20.120.1760">
    <property type="match status" value="1"/>
</dbReference>
<dbReference type="HAMAP" id="MF_02241">
    <property type="entry name" value="PIP_synthase"/>
    <property type="match status" value="1"/>
</dbReference>
<dbReference type="InterPro" id="IPR000462">
    <property type="entry name" value="CDP-OH_P_trans"/>
</dbReference>
<dbReference type="InterPro" id="IPR043130">
    <property type="entry name" value="CDP-OH_PTrfase_TM_dom"/>
</dbReference>
<dbReference type="InterPro" id="IPR048254">
    <property type="entry name" value="CDP_ALCOHOL_P_TRANSF_CS"/>
</dbReference>
<dbReference type="InterPro" id="IPR044268">
    <property type="entry name" value="PIP_synthase_PgsA1"/>
</dbReference>
<dbReference type="NCBIfam" id="NF045883">
    <property type="entry name" value="PIPSynth"/>
    <property type="match status" value="1"/>
</dbReference>
<dbReference type="Pfam" id="PF01066">
    <property type="entry name" value="CDP-OH_P_transf"/>
    <property type="match status" value="1"/>
</dbReference>
<dbReference type="PROSITE" id="PS00379">
    <property type="entry name" value="CDP_ALCOHOL_P_TRANSF"/>
    <property type="match status" value="1"/>
</dbReference>
<gene>
    <name evidence="8" type="primary">pgsA</name>
    <name evidence="12" type="ordered locus">MSMEG_2933</name>
</gene>
<keyword id="KW-1003">Cell membrane</keyword>
<keyword id="KW-0134">Cell wall</keyword>
<keyword id="KW-0444">Lipid biosynthesis</keyword>
<keyword id="KW-0443">Lipid metabolism</keyword>
<keyword id="KW-0460">Magnesium</keyword>
<keyword id="KW-0472">Membrane</keyword>
<keyword id="KW-0479">Metal-binding</keyword>
<keyword id="KW-0594">Phospholipid biosynthesis</keyword>
<keyword id="KW-1208">Phospholipid metabolism</keyword>
<keyword id="KW-1185">Reference proteome</keyword>
<keyword id="KW-0964">Secreted</keyword>
<keyword id="KW-0808">Transferase</keyword>
<keyword id="KW-0812">Transmembrane</keyword>
<keyword id="KW-1133">Transmembrane helix</keyword>
<name>PIPS_MYCS2</name>
<protein>
    <recommendedName>
        <fullName evidence="9">Phosphatidylinositol phosphate synthase</fullName>
        <shortName evidence="9">PIP synthase</shortName>
        <ecNumber evidence="6">2.7.8.-</ecNumber>
    </recommendedName>
    <alternativeName>
        <fullName>CDP-diacylglycerol--D-myo-inositol-3-phosphate 3-phosphatidyltransferase</fullName>
    </alternativeName>
</protein>